<dbReference type="EMBL" id="U18779">
    <property type="status" value="NOT_ANNOTATED_CDS"/>
    <property type="molecule type" value="Genomic_DNA"/>
</dbReference>
<dbReference type="EMBL" id="AF479944">
    <property type="protein sequence ID" value="AAL79257.1"/>
    <property type="molecule type" value="Genomic_DNA"/>
</dbReference>
<dbReference type="SMR" id="Q8TGP4"/>
<dbReference type="STRING" id="4932.YEL032C-A"/>
<dbReference type="PaxDb" id="4932-YEL032C-A"/>
<dbReference type="EnsemblFungi" id="YEL032C-A_mRNA">
    <property type="protein sequence ID" value="YEL032C-A"/>
    <property type="gene ID" value="YEL032C-A"/>
</dbReference>
<dbReference type="AGR" id="SGD:S000028620"/>
<dbReference type="SGD" id="S000028620">
    <property type="gene designation" value="YEL032C-A"/>
</dbReference>
<dbReference type="HOGENOM" id="CLU_3070467_0_0_1"/>
<sequence length="53" mass="6690">MRWTMLLSFPFQDHHRRHHLANLVRLRHLDHRCSWPRYCCCKLVWTLQSLCMR</sequence>
<comment type="miscellaneous">
    <text evidence="1">Completely overlaps MCM3.</text>
</comment>
<comment type="caution">
    <text evidence="2">Product of a dubious gene prediction unlikely to encode a functional protein. Because of that it is not part of the S.cerevisiae S288c complete/reference proteome set.</text>
</comment>
<feature type="chain" id="PRO_0000299908" description="Putative uncharacterized protein YEL032C-A">
    <location>
        <begin position="1"/>
        <end position="53"/>
    </location>
</feature>
<gene>
    <name type="ordered locus">YEL032C-A</name>
</gene>
<accession>Q8TGP4</accession>
<reference key="1">
    <citation type="journal article" date="1997" name="Nature">
        <title>The nucleotide sequence of Saccharomyces cerevisiae chromosome V.</title>
        <authorList>
            <person name="Dietrich F.S."/>
            <person name="Mulligan J.T."/>
            <person name="Hennessy K.M."/>
            <person name="Yelton M.A."/>
            <person name="Allen E."/>
            <person name="Araujo R."/>
            <person name="Aviles E."/>
            <person name="Berno A."/>
            <person name="Brennan T."/>
            <person name="Carpenter J."/>
            <person name="Chen E."/>
            <person name="Cherry J.M."/>
            <person name="Chung E."/>
            <person name="Duncan M."/>
            <person name="Guzman E."/>
            <person name="Hartzell G."/>
            <person name="Hunicke-Smith S."/>
            <person name="Hyman R.W."/>
            <person name="Kayser A."/>
            <person name="Komp C."/>
            <person name="Lashkari D."/>
            <person name="Lew H."/>
            <person name="Lin D."/>
            <person name="Mosedale D."/>
            <person name="Nakahara K."/>
            <person name="Namath A."/>
            <person name="Norgren R."/>
            <person name="Oefner P."/>
            <person name="Oh C."/>
            <person name="Petel F.X."/>
            <person name="Roberts D."/>
            <person name="Sehl P."/>
            <person name="Schramm S."/>
            <person name="Shogren T."/>
            <person name="Smith V."/>
            <person name="Taylor P."/>
            <person name="Wei Y."/>
            <person name="Botstein D."/>
            <person name="Davis R.W."/>
        </authorList>
    </citation>
    <scope>NUCLEOTIDE SEQUENCE [LARGE SCALE GENOMIC DNA]</scope>
    <source>
        <strain>ATCC 204508 / S288c</strain>
    </source>
</reference>
<reference key="2">
    <citation type="journal article" date="2014" name="G3 (Bethesda)">
        <title>The reference genome sequence of Saccharomyces cerevisiae: Then and now.</title>
        <authorList>
            <person name="Engel S.R."/>
            <person name="Dietrich F.S."/>
            <person name="Fisk D.G."/>
            <person name="Binkley G."/>
            <person name="Balakrishnan R."/>
            <person name="Costanzo M.C."/>
            <person name="Dwight S.S."/>
            <person name="Hitz B.C."/>
            <person name="Karra K."/>
            <person name="Nash R.S."/>
            <person name="Weng S."/>
            <person name="Wong E.D."/>
            <person name="Lloyd P."/>
            <person name="Skrzypek M.S."/>
            <person name="Miyasato S.R."/>
            <person name="Simison M."/>
            <person name="Cherry J.M."/>
        </authorList>
    </citation>
    <scope>GENOME REANNOTATION</scope>
    <source>
        <strain>ATCC 204508 / S288c</strain>
    </source>
</reference>
<reference key="3">
    <citation type="journal article" date="2002" name="Nat. Biotechnol.">
        <title>An integrated approach for finding overlooked genes in yeast.</title>
        <authorList>
            <person name="Kumar A."/>
            <person name="Harrison P.M."/>
            <person name="Cheung K.-H."/>
            <person name="Lan N."/>
            <person name="Echols N."/>
            <person name="Bertone P."/>
            <person name="Miller P."/>
            <person name="Gerstein M.B."/>
            <person name="Snyder M."/>
        </authorList>
    </citation>
    <scope>NUCLEOTIDE SEQUENCE [GENOMIC DNA]</scope>
</reference>
<proteinExistence type="uncertain"/>
<evidence type="ECO:0000305" key="1"/>
<evidence type="ECO:0000305" key="2">
    <source>
    </source>
</evidence>
<protein>
    <recommendedName>
        <fullName>Putative uncharacterized protein YEL032C-A</fullName>
    </recommendedName>
</protein>
<name>YE032_YEAST</name>
<organism>
    <name type="scientific">Saccharomyces cerevisiae (strain ATCC 204508 / S288c)</name>
    <name type="common">Baker's yeast</name>
    <dbReference type="NCBI Taxonomy" id="559292"/>
    <lineage>
        <taxon>Eukaryota</taxon>
        <taxon>Fungi</taxon>
        <taxon>Dikarya</taxon>
        <taxon>Ascomycota</taxon>
        <taxon>Saccharomycotina</taxon>
        <taxon>Saccharomycetes</taxon>
        <taxon>Saccharomycetales</taxon>
        <taxon>Saccharomycetaceae</taxon>
        <taxon>Saccharomyces</taxon>
    </lineage>
</organism>